<name>RNPA_SALTI</name>
<accession>P66687</accession>
<accession>Q8XEW2</accession>
<feature type="chain" id="PRO_0000198520" description="Ribonuclease P protein component">
    <location>
        <begin position="1"/>
        <end position="119"/>
    </location>
</feature>
<keyword id="KW-0255">Endonuclease</keyword>
<keyword id="KW-0378">Hydrolase</keyword>
<keyword id="KW-0540">Nuclease</keyword>
<keyword id="KW-0694">RNA-binding</keyword>
<keyword id="KW-0819">tRNA processing</keyword>
<sequence>MVKLAFPRELRLLTPAHFTFVFQQPQRAGTPQITILGRLNSLGHPRIGLTVAKKNVRRAHERNRIKRLTRESFRLRQHELPAMDFVVVAKKGVADLDNRALSEALEKLWRRHCRLARGS</sequence>
<dbReference type="EC" id="3.1.26.5" evidence="1"/>
<dbReference type="EMBL" id="AL513382">
    <property type="protein sequence ID" value="CAD03155.1"/>
    <property type="molecule type" value="Genomic_DNA"/>
</dbReference>
<dbReference type="EMBL" id="AE014613">
    <property type="protein sequence ID" value="AAO71175.1"/>
    <property type="molecule type" value="Genomic_DNA"/>
</dbReference>
<dbReference type="RefSeq" id="NP_458102.1">
    <property type="nucleotide sequence ID" value="NC_003198.1"/>
</dbReference>
<dbReference type="RefSeq" id="WP_000239725.1">
    <property type="nucleotide sequence ID" value="NZ_WSUR01000023.1"/>
</dbReference>
<dbReference type="SMR" id="P66687"/>
<dbReference type="STRING" id="220341.gene:17587798"/>
<dbReference type="GeneID" id="93035306"/>
<dbReference type="KEGG" id="stt:t3679"/>
<dbReference type="KEGG" id="sty:STY3939"/>
<dbReference type="PATRIC" id="fig|220341.7.peg.4020"/>
<dbReference type="eggNOG" id="COG0594">
    <property type="taxonomic scope" value="Bacteria"/>
</dbReference>
<dbReference type="HOGENOM" id="CLU_117179_11_0_6"/>
<dbReference type="OMA" id="LHQHELP"/>
<dbReference type="OrthoDB" id="9796422at2"/>
<dbReference type="Proteomes" id="UP000000541">
    <property type="component" value="Chromosome"/>
</dbReference>
<dbReference type="Proteomes" id="UP000002670">
    <property type="component" value="Chromosome"/>
</dbReference>
<dbReference type="GO" id="GO:0030677">
    <property type="term" value="C:ribonuclease P complex"/>
    <property type="evidence" value="ECO:0007669"/>
    <property type="project" value="TreeGrafter"/>
</dbReference>
<dbReference type="GO" id="GO:0042781">
    <property type="term" value="F:3'-tRNA processing endoribonuclease activity"/>
    <property type="evidence" value="ECO:0007669"/>
    <property type="project" value="TreeGrafter"/>
</dbReference>
<dbReference type="GO" id="GO:0004526">
    <property type="term" value="F:ribonuclease P activity"/>
    <property type="evidence" value="ECO:0007669"/>
    <property type="project" value="UniProtKB-UniRule"/>
</dbReference>
<dbReference type="GO" id="GO:0000049">
    <property type="term" value="F:tRNA binding"/>
    <property type="evidence" value="ECO:0007669"/>
    <property type="project" value="UniProtKB-UniRule"/>
</dbReference>
<dbReference type="GO" id="GO:0001682">
    <property type="term" value="P:tRNA 5'-leader removal"/>
    <property type="evidence" value="ECO:0007669"/>
    <property type="project" value="UniProtKB-UniRule"/>
</dbReference>
<dbReference type="FunFam" id="3.30.230.10:FF:000016">
    <property type="entry name" value="Ribonuclease P protein component"/>
    <property type="match status" value="1"/>
</dbReference>
<dbReference type="Gene3D" id="3.30.230.10">
    <property type="match status" value="1"/>
</dbReference>
<dbReference type="HAMAP" id="MF_00227">
    <property type="entry name" value="RNase_P"/>
    <property type="match status" value="1"/>
</dbReference>
<dbReference type="InterPro" id="IPR020568">
    <property type="entry name" value="Ribosomal_Su5_D2-typ_SF"/>
</dbReference>
<dbReference type="InterPro" id="IPR014721">
    <property type="entry name" value="Ribsml_uS5_D2-typ_fold_subgr"/>
</dbReference>
<dbReference type="InterPro" id="IPR000100">
    <property type="entry name" value="RNase_P"/>
</dbReference>
<dbReference type="InterPro" id="IPR020539">
    <property type="entry name" value="RNase_P_CS"/>
</dbReference>
<dbReference type="NCBIfam" id="TIGR00188">
    <property type="entry name" value="rnpA"/>
    <property type="match status" value="1"/>
</dbReference>
<dbReference type="PANTHER" id="PTHR33992">
    <property type="entry name" value="RIBONUCLEASE P PROTEIN COMPONENT"/>
    <property type="match status" value="1"/>
</dbReference>
<dbReference type="PANTHER" id="PTHR33992:SF1">
    <property type="entry name" value="RIBONUCLEASE P PROTEIN COMPONENT"/>
    <property type="match status" value="1"/>
</dbReference>
<dbReference type="Pfam" id="PF00825">
    <property type="entry name" value="Ribonuclease_P"/>
    <property type="match status" value="1"/>
</dbReference>
<dbReference type="SUPFAM" id="SSF54211">
    <property type="entry name" value="Ribosomal protein S5 domain 2-like"/>
    <property type="match status" value="1"/>
</dbReference>
<dbReference type="PROSITE" id="PS00648">
    <property type="entry name" value="RIBONUCLEASE_P"/>
    <property type="match status" value="1"/>
</dbReference>
<proteinExistence type="inferred from homology"/>
<gene>
    <name evidence="1" type="primary">rnpA</name>
    <name type="ordered locus">STY3939</name>
    <name type="ordered locus">t3679</name>
</gene>
<comment type="function">
    <text evidence="1">RNaseP catalyzes the removal of the 5'-leader sequence from pre-tRNA to produce the mature 5'-terminus. It can also cleave other RNA substrates such as 4.5S RNA. The protein component plays an auxiliary but essential role in vivo by binding to the 5'-leader sequence and broadening the substrate specificity of the ribozyme.</text>
</comment>
<comment type="catalytic activity">
    <reaction evidence="1">
        <text>Endonucleolytic cleavage of RNA, removing 5'-extranucleotides from tRNA precursor.</text>
        <dbReference type="EC" id="3.1.26.5"/>
    </reaction>
</comment>
<comment type="subunit">
    <text evidence="1">Consists of a catalytic RNA component (M1 or rnpB) and a protein subunit.</text>
</comment>
<comment type="similarity">
    <text evidence="1">Belongs to the RnpA family.</text>
</comment>
<evidence type="ECO:0000255" key="1">
    <source>
        <dbReference type="HAMAP-Rule" id="MF_00227"/>
    </source>
</evidence>
<organism>
    <name type="scientific">Salmonella typhi</name>
    <dbReference type="NCBI Taxonomy" id="90370"/>
    <lineage>
        <taxon>Bacteria</taxon>
        <taxon>Pseudomonadati</taxon>
        <taxon>Pseudomonadota</taxon>
        <taxon>Gammaproteobacteria</taxon>
        <taxon>Enterobacterales</taxon>
        <taxon>Enterobacteriaceae</taxon>
        <taxon>Salmonella</taxon>
    </lineage>
</organism>
<protein>
    <recommendedName>
        <fullName evidence="1">Ribonuclease P protein component</fullName>
        <shortName evidence="1">RNase P protein</shortName>
        <shortName evidence="1">RNaseP protein</shortName>
        <ecNumber evidence="1">3.1.26.5</ecNumber>
    </recommendedName>
    <alternativeName>
        <fullName evidence="1">Protein C5</fullName>
    </alternativeName>
</protein>
<reference key="1">
    <citation type="journal article" date="2001" name="Nature">
        <title>Complete genome sequence of a multiple drug resistant Salmonella enterica serovar Typhi CT18.</title>
        <authorList>
            <person name="Parkhill J."/>
            <person name="Dougan G."/>
            <person name="James K.D."/>
            <person name="Thomson N.R."/>
            <person name="Pickard D."/>
            <person name="Wain J."/>
            <person name="Churcher C.M."/>
            <person name="Mungall K.L."/>
            <person name="Bentley S.D."/>
            <person name="Holden M.T.G."/>
            <person name="Sebaihia M."/>
            <person name="Baker S."/>
            <person name="Basham D."/>
            <person name="Brooks K."/>
            <person name="Chillingworth T."/>
            <person name="Connerton P."/>
            <person name="Cronin A."/>
            <person name="Davis P."/>
            <person name="Davies R.M."/>
            <person name="Dowd L."/>
            <person name="White N."/>
            <person name="Farrar J."/>
            <person name="Feltwell T."/>
            <person name="Hamlin N."/>
            <person name="Haque A."/>
            <person name="Hien T.T."/>
            <person name="Holroyd S."/>
            <person name="Jagels K."/>
            <person name="Krogh A."/>
            <person name="Larsen T.S."/>
            <person name="Leather S."/>
            <person name="Moule S."/>
            <person name="O'Gaora P."/>
            <person name="Parry C."/>
            <person name="Quail M.A."/>
            <person name="Rutherford K.M."/>
            <person name="Simmonds M."/>
            <person name="Skelton J."/>
            <person name="Stevens K."/>
            <person name="Whitehead S."/>
            <person name="Barrell B.G."/>
        </authorList>
    </citation>
    <scope>NUCLEOTIDE SEQUENCE [LARGE SCALE GENOMIC DNA]</scope>
    <source>
        <strain>CT18</strain>
    </source>
</reference>
<reference key="2">
    <citation type="journal article" date="2003" name="J. Bacteriol.">
        <title>Comparative genomics of Salmonella enterica serovar Typhi strains Ty2 and CT18.</title>
        <authorList>
            <person name="Deng W."/>
            <person name="Liou S.-R."/>
            <person name="Plunkett G. III"/>
            <person name="Mayhew G.F."/>
            <person name="Rose D.J."/>
            <person name="Burland V."/>
            <person name="Kodoyianni V."/>
            <person name="Schwartz D.C."/>
            <person name="Blattner F.R."/>
        </authorList>
    </citation>
    <scope>NUCLEOTIDE SEQUENCE [LARGE SCALE GENOMIC DNA]</scope>
    <source>
        <strain>ATCC 700931 / Ty2</strain>
    </source>
</reference>